<sequence>MYAIIETGGKQYMVREGDVLKVEKLNYPEGEVIALDKVLAVSFEDGNVEFGKPYLENVKVTAKVLEHGKGPKIRVFKYKPKKNYRRRQGHRQPYTKIQIEKIEK</sequence>
<organism>
    <name type="scientific">Caldanaerobacter subterraneus subsp. tengcongensis (strain DSM 15242 / JCM 11007 / NBRC 100824 / MB4)</name>
    <name type="common">Thermoanaerobacter tengcongensis</name>
    <dbReference type="NCBI Taxonomy" id="273068"/>
    <lineage>
        <taxon>Bacteria</taxon>
        <taxon>Bacillati</taxon>
        <taxon>Bacillota</taxon>
        <taxon>Clostridia</taxon>
        <taxon>Thermoanaerobacterales</taxon>
        <taxon>Thermoanaerobacteraceae</taxon>
        <taxon>Caldanaerobacter</taxon>
    </lineage>
</organism>
<keyword id="KW-1185">Reference proteome</keyword>
<keyword id="KW-0687">Ribonucleoprotein</keyword>
<keyword id="KW-0689">Ribosomal protein</keyword>
<keyword id="KW-0694">RNA-binding</keyword>
<keyword id="KW-0699">rRNA-binding</keyword>
<protein>
    <recommendedName>
        <fullName evidence="1">Large ribosomal subunit protein bL21</fullName>
    </recommendedName>
    <alternativeName>
        <fullName evidence="2">50S ribosomal protein L21</fullName>
    </alternativeName>
</protein>
<accession>Q8RBA9</accession>
<dbReference type="EMBL" id="AE008691">
    <property type="protein sequence ID" value="AAM24169.1"/>
    <property type="molecule type" value="Genomic_DNA"/>
</dbReference>
<dbReference type="RefSeq" id="WP_011025289.1">
    <property type="nucleotide sequence ID" value="NZ_JANUCV010000001.1"/>
</dbReference>
<dbReference type="SMR" id="Q8RBA9"/>
<dbReference type="STRING" id="273068.TTE0913"/>
<dbReference type="KEGG" id="tte:TTE0913"/>
<dbReference type="eggNOG" id="COG0261">
    <property type="taxonomic scope" value="Bacteria"/>
</dbReference>
<dbReference type="HOGENOM" id="CLU_061463_3_2_9"/>
<dbReference type="OrthoDB" id="9813334at2"/>
<dbReference type="Proteomes" id="UP000000555">
    <property type="component" value="Chromosome"/>
</dbReference>
<dbReference type="GO" id="GO:0005737">
    <property type="term" value="C:cytoplasm"/>
    <property type="evidence" value="ECO:0007669"/>
    <property type="project" value="UniProtKB-ARBA"/>
</dbReference>
<dbReference type="GO" id="GO:1990904">
    <property type="term" value="C:ribonucleoprotein complex"/>
    <property type="evidence" value="ECO:0007669"/>
    <property type="project" value="UniProtKB-KW"/>
</dbReference>
<dbReference type="GO" id="GO:0005840">
    <property type="term" value="C:ribosome"/>
    <property type="evidence" value="ECO:0007669"/>
    <property type="project" value="UniProtKB-KW"/>
</dbReference>
<dbReference type="GO" id="GO:0019843">
    <property type="term" value="F:rRNA binding"/>
    <property type="evidence" value="ECO:0007669"/>
    <property type="project" value="UniProtKB-UniRule"/>
</dbReference>
<dbReference type="GO" id="GO:0003735">
    <property type="term" value="F:structural constituent of ribosome"/>
    <property type="evidence" value="ECO:0007669"/>
    <property type="project" value="InterPro"/>
</dbReference>
<dbReference type="GO" id="GO:0006412">
    <property type="term" value="P:translation"/>
    <property type="evidence" value="ECO:0007669"/>
    <property type="project" value="UniProtKB-UniRule"/>
</dbReference>
<dbReference type="HAMAP" id="MF_01363">
    <property type="entry name" value="Ribosomal_bL21"/>
    <property type="match status" value="1"/>
</dbReference>
<dbReference type="InterPro" id="IPR028909">
    <property type="entry name" value="bL21-like"/>
</dbReference>
<dbReference type="InterPro" id="IPR036164">
    <property type="entry name" value="bL21-like_sf"/>
</dbReference>
<dbReference type="InterPro" id="IPR001787">
    <property type="entry name" value="Ribosomal_bL21"/>
</dbReference>
<dbReference type="InterPro" id="IPR018258">
    <property type="entry name" value="Ribosomal_bL21_CS"/>
</dbReference>
<dbReference type="NCBIfam" id="TIGR00061">
    <property type="entry name" value="L21"/>
    <property type="match status" value="1"/>
</dbReference>
<dbReference type="PANTHER" id="PTHR21349">
    <property type="entry name" value="50S RIBOSOMAL PROTEIN L21"/>
    <property type="match status" value="1"/>
</dbReference>
<dbReference type="PANTHER" id="PTHR21349:SF0">
    <property type="entry name" value="LARGE RIBOSOMAL SUBUNIT PROTEIN BL21M"/>
    <property type="match status" value="1"/>
</dbReference>
<dbReference type="Pfam" id="PF00829">
    <property type="entry name" value="Ribosomal_L21p"/>
    <property type="match status" value="1"/>
</dbReference>
<dbReference type="SUPFAM" id="SSF141091">
    <property type="entry name" value="L21p-like"/>
    <property type="match status" value="1"/>
</dbReference>
<dbReference type="PROSITE" id="PS01169">
    <property type="entry name" value="RIBOSOMAL_L21"/>
    <property type="match status" value="1"/>
</dbReference>
<proteinExistence type="inferred from homology"/>
<comment type="function">
    <text evidence="1">This protein binds to 23S rRNA in the presence of protein L20.</text>
</comment>
<comment type="subunit">
    <text evidence="1">Part of the 50S ribosomal subunit. Contacts protein L20.</text>
</comment>
<comment type="similarity">
    <text evidence="1">Belongs to the bacterial ribosomal protein bL21 family.</text>
</comment>
<name>RL21_CALS4</name>
<feature type="chain" id="PRO_0000269414" description="Large ribosomal subunit protein bL21">
    <location>
        <begin position="1"/>
        <end position="104"/>
    </location>
</feature>
<gene>
    <name evidence="1" type="primary">rplU</name>
    <name type="ordered locus">TTE0913</name>
</gene>
<reference key="1">
    <citation type="journal article" date="2002" name="Genome Res.">
        <title>A complete sequence of the T. tengcongensis genome.</title>
        <authorList>
            <person name="Bao Q."/>
            <person name="Tian Y."/>
            <person name="Li W."/>
            <person name="Xu Z."/>
            <person name="Xuan Z."/>
            <person name="Hu S."/>
            <person name="Dong W."/>
            <person name="Yang J."/>
            <person name="Chen Y."/>
            <person name="Xue Y."/>
            <person name="Xu Y."/>
            <person name="Lai X."/>
            <person name="Huang L."/>
            <person name="Dong X."/>
            <person name="Ma Y."/>
            <person name="Ling L."/>
            <person name="Tan H."/>
            <person name="Chen R."/>
            <person name="Wang J."/>
            <person name="Yu J."/>
            <person name="Yang H."/>
        </authorList>
    </citation>
    <scope>NUCLEOTIDE SEQUENCE [LARGE SCALE GENOMIC DNA]</scope>
    <source>
        <strain>DSM 15242 / JCM 11007 / NBRC 100824 / MB4</strain>
    </source>
</reference>
<evidence type="ECO:0000255" key="1">
    <source>
        <dbReference type="HAMAP-Rule" id="MF_01363"/>
    </source>
</evidence>
<evidence type="ECO:0000305" key="2"/>